<accession>B0UHU7</accession>
<gene>
    <name evidence="1" type="primary">rpsM</name>
    <name type="ordered locus">M446_0331</name>
</gene>
<reference key="1">
    <citation type="submission" date="2008-02" db="EMBL/GenBank/DDBJ databases">
        <title>Complete sequence of chromosome of Methylobacterium sp. 4-46.</title>
        <authorList>
            <consortium name="US DOE Joint Genome Institute"/>
            <person name="Copeland A."/>
            <person name="Lucas S."/>
            <person name="Lapidus A."/>
            <person name="Glavina del Rio T."/>
            <person name="Dalin E."/>
            <person name="Tice H."/>
            <person name="Bruce D."/>
            <person name="Goodwin L."/>
            <person name="Pitluck S."/>
            <person name="Chertkov O."/>
            <person name="Brettin T."/>
            <person name="Detter J.C."/>
            <person name="Han C."/>
            <person name="Kuske C.R."/>
            <person name="Schmutz J."/>
            <person name="Larimer F."/>
            <person name="Land M."/>
            <person name="Hauser L."/>
            <person name="Kyrpides N."/>
            <person name="Ivanova N."/>
            <person name="Marx C.J."/>
            <person name="Richardson P."/>
        </authorList>
    </citation>
    <scope>NUCLEOTIDE SEQUENCE [LARGE SCALE GENOMIC DNA]</scope>
    <source>
        <strain>4-46</strain>
    </source>
</reference>
<sequence length="122" mass="13872">MARIAGVNIPTNKRVVIALQYIHGIGPKKAEEITEKVGIPAERRVNQLTDAEVLQIREAIDRDYVVEGDLRREVAMNIKRLMDLGCYRGLRHRRNLPVRGQRTHTNARTRKGKAKPIAGKKK</sequence>
<protein>
    <recommendedName>
        <fullName evidence="1">Small ribosomal subunit protein uS13</fullName>
    </recommendedName>
    <alternativeName>
        <fullName evidence="3">30S ribosomal protein S13</fullName>
    </alternativeName>
</protein>
<dbReference type="EMBL" id="CP000943">
    <property type="protein sequence ID" value="ACA14902.1"/>
    <property type="molecule type" value="Genomic_DNA"/>
</dbReference>
<dbReference type="RefSeq" id="WP_012330320.1">
    <property type="nucleotide sequence ID" value="NC_010511.1"/>
</dbReference>
<dbReference type="SMR" id="B0UHU7"/>
<dbReference type="STRING" id="426117.M446_0331"/>
<dbReference type="KEGG" id="met:M446_0331"/>
<dbReference type="eggNOG" id="COG0099">
    <property type="taxonomic scope" value="Bacteria"/>
</dbReference>
<dbReference type="HOGENOM" id="CLU_103849_1_2_5"/>
<dbReference type="GO" id="GO:0005829">
    <property type="term" value="C:cytosol"/>
    <property type="evidence" value="ECO:0007669"/>
    <property type="project" value="TreeGrafter"/>
</dbReference>
<dbReference type="GO" id="GO:0015935">
    <property type="term" value="C:small ribosomal subunit"/>
    <property type="evidence" value="ECO:0007669"/>
    <property type="project" value="TreeGrafter"/>
</dbReference>
<dbReference type="GO" id="GO:0019843">
    <property type="term" value="F:rRNA binding"/>
    <property type="evidence" value="ECO:0007669"/>
    <property type="project" value="UniProtKB-UniRule"/>
</dbReference>
<dbReference type="GO" id="GO:0003735">
    <property type="term" value="F:structural constituent of ribosome"/>
    <property type="evidence" value="ECO:0007669"/>
    <property type="project" value="InterPro"/>
</dbReference>
<dbReference type="GO" id="GO:0000049">
    <property type="term" value="F:tRNA binding"/>
    <property type="evidence" value="ECO:0007669"/>
    <property type="project" value="UniProtKB-UniRule"/>
</dbReference>
<dbReference type="GO" id="GO:0006412">
    <property type="term" value="P:translation"/>
    <property type="evidence" value="ECO:0007669"/>
    <property type="project" value="UniProtKB-UniRule"/>
</dbReference>
<dbReference type="FunFam" id="1.10.8.50:FF:000001">
    <property type="entry name" value="30S ribosomal protein S13"/>
    <property type="match status" value="1"/>
</dbReference>
<dbReference type="FunFam" id="4.10.910.10:FF:000001">
    <property type="entry name" value="30S ribosomal protein S13"/>
    <property type="match status" value="1"/>
</dbReference>
<dbReference type="Gene3D" id="1.10.8.50">
    <property type="match status" value="1"/>
</dbReference>
<dbReference type="Gene3D" id="4.10.910.10">
    <property type="entry name" value="30s ribosomal protein s13, domain 2"/>
    <property type="match status" value="1"/>
</dbReference>
<dbReference type="HAMAP" id="MF_01315">
    <property type="entry name" value="Ribosomal_uS13"/>
    <property type="match status" value="1"/>
</dbReference>
<dbReference type="InterPro" id="IPR027437">
    <property type="entry name" value="Rbsml_uS13_C"/>
</dbReference>
<dbReference type="InterPro" id="IPR001892">
    <property type="entry name" value="Ribosomal_uS13"/>
</dbReference>
<dbReference type="InterPro" id="IPR010979">
    <property type="entry name" value="Ribosomal_uS13-like_H2TH"/>
</dbReference>
<dbReference type="InterPro" id="IPR019980">
    <property type="entry name" value="Ribosomal_uS13_bac-type"/>
</dbReference>
<dbReference type="InterPro" id="IPR018269">
    <property type="entry name" value="Ribosomal_uS13_CS"/>
</dbReference>
<dbReference type="NCBIfam" id="TIGR03631">
    <property type="entry name" value="uS13_bact"/>
    <property type="match status" value="1"/>
</dbReference>
<dbReference type="PANTHER" id="PTHR10871">
    <property type="entry name" value="30S RIBOSOMAL PROTEIN S13/40S RIBOSOMAL PROTEIN S18"/>
    <property type="match status" value="1"/>
</dbReference>
<dbReference type="PANTHER" id="PTHR10871:SF1">
    <property type="entry name" value="SMALL RIBOSOMAL SUBUNIT PROTEIN US13M"/>
    <property type="match status" value="1"/>
</dbReference>
<dbReference type="Pfam" id="PF00416">
    <property type="entry name" value="Ribosomal_S13"/>
    <property type="match status" value="1"/>
</dbReference>
<dbReference type="PIRSF" id="PIRSF002134">
    <property type="entry name" value="Ribosomal_S13"/>
    <property type="match status" value="1"/>
</dbReference>
<dbReference type="SUPFAM" id="SSF46946">
    <property type="entry name" value="S13-like H2TH domain"/>
    <property type="match status" value="1"/>
</dbReference>
<dbReference type="PROSITE" id="PS00646">
    <property type="entry name" value="RIBOSOMAL_S13_1"/>
    <property type="match status" value="1"/>
</dbReference>
<dbReference type="PROSITE" id="PS50159">
    <property type="entry name" value="RIBOSOMAL_S13_2"/>
    <property type="match status" value="1"/>
</dbReference>
<name>RS13_METS4</name>
<keyword id="KW-0687">Ribonucleoprotein</keyword>
<keyword id="KW-0689">Ribosomal protein</keyword>
<keyword id="KW-0694">RNA-binding</keyword>
<keyword id="KW-0699">rRNA-binding</keyword>
<keyword id="KW-0820">tRNA-binding</keyword>
<evidence type="ECO:0000255" key="1">
    <source>
        <dbReference type="HAMAP-Rule" id="MF_01315"/>
    </source>
</evidence>
<evidence type="ECO:0000256" key="2">
    <source>
        <dbReference type="SAM" id="MobiDB-lite"/>
    </source>
</evidence>
<evidence type="ECO:0000305" key="3"/>
<proteinExistence type="inferred from homology"/>
<comment type="function">
    <text evidence="1">Located at the top of the head of the 30S subunit, it contacts several helices of the 16S rRNA. In the 70S ribosome it contacts the 23S rRNA (bridge B1a) and protein L5 of the 50S subunit (bridge B1b), connecting the 2 subunits; these bridges are implicated in subunit movement. Contacts the tRNAs in the A and P-sites.</text>
</comment>
<comment type="subunit">
    <text evidence="1">Part of the 30S ribosomal subunit. Forms a loose heterodimer with protein S19. Forms two bridges to the 50S subunit in the 70S ribosome.</text>
</comment>
<comment type="similarity">
    <text evidence="1">Belongs to the universal ribosomal protein uS13 family.</text>
</comment>
<feature type="chain" id="PRO_1000141288" description="Small ribosomal subunit protein uS13">
    <location>
        <begin position="1"/>
        <end position="122"/>
    </location>
</feature>
<feature type="region of interest" description="Disordered" evidence="2">
    <location>
        <begin position="95"/>
        <end position="122"/>
    </location>
</feature>
<organism>
    <name type="scientific">Methylobacterium sp. (strain 4-46)</name>
    <dbReference type="NCBI Taxonomy" id="426117"/>
    <lineage>
        <taxon>Bacteria</taxon>
        <taxon>Pseudomonadati</taxon>
        <taxon>Pseudomonadota</taxon>
        <taxon>Alphaproteobacteria</taxon>
        <taxon>Hyphomicrobiales</taxon>
        <taxon>Methylobacteriaceae</taxon>
        <taxon>Methylobacterium</taxon>
    </lineage>
</organism>